<comment type="function">
    <text evidence="1">This is one of the proteins that bind and probably mediate the attachment of the 5S RNA into the large ribosomal subunit, where it forms part of the central protuberance. In the 70S ribosome it contacts protein S13 of the 30S subunit (bridge B1b), connecting the 2 subunits; this bridge is implicated in subunit movement. Contacts the P site tRNA; the 5S rRNA and some of its associated proteins might help stabilize positioning of ribosome-bound tRNAs.</text>
</comment>
<comment type="subunit">
    <text evidence="1">Part of the 50S ribosomal subunit; part of the 5S rRNA/L5/L18/L25 subcomplex. Contacts the 5S rRNA and the P site tRNA. Forms a bridge to the 30S subunit in the 70S ribosome.</text>
</comment>
<comment type="similarity">
    <text evidence="1">Belongs to the universal ribosomal protein uL5 family.</text>
</comment>
<accession>A8IAQ3</accession>
<name>RL5_AZOC5</name>
<feature type="chain" id="PRO_1000073284" description="Large ribosomal subunit protein uL5">
    <location>
        <begin position="1"/>
        <end position="185"/>
    </location>
</feature>
<dbReference type="EMBL" id="AP009384">
    <property type="protein sequence ID" value="BAF88540.1"/>
    <property type="molecule type" value="Genomic_DNA"/>
</dbReference>
<dbReference type="RefSeq" id="WP_012171068.1">
    <property type="nucleotide sequence ID" value="NC_009937.1"/>
</dbReference>
<dbReference type="SMR" id="A8IAQ3"/>
<dbReference type="STRING" id="438753.AZC_2542"/>
<dbReference type="KEGG" id="azc:AZC_2542"/>
<dbReference type="eggNOG" id="COG0094">
    <property type="taxonomic scope" value="Bacteria"/>
</dbReference>
<dbReference type="HOGENOM" id="CLU_061015_2_1_5"/>
<dbReference type="Proteomes" id="UP000000270">
    <property type="component" value="Chromosome"/>
</dbReference>
<dbReference type="GO" id="GO:1990904">
    <property type="term" value="C:ribonucleoprotein complex"/>
    <property type="evidence" value="ECO:0007669"/>
    <property type="project" value="UniProtKB-KW"/>
</dbReference>
<dbReference type="GO" id="GO:0005840">
    <property type="term" value="C:ribosome"/>
    <property type="evidence" value="ECO:0007669"/>
    <property type="project" value="UniProtKB-KW"/>
</dbReference>
<dbReference type="GO" id="GO:0019843">
    <property type="term" value="F:rRNA binding"/>
    <property type="evidence" value="ECO:0007669"/>
    <property type="project" value="UniProtKB-UniRule"/>
</dbReference>
<dbReference type="GO" id="GO:0003735">
    <property type="term" value="F:structural constituent of ribosome"/>
    <property type="evidence" value="ECO:0007669"/>
    <property type="project" value="InterPro"/>
</dbReference>
<dbReference type="GO" id="GO:0000049">
    <property type="term" value="F:tRNA binding"/>
    <property type="evidence" value="ECO:0007669"/>
    <property type="project" value="UniProtKB-UniRule"/>
</dbReference>
<dbReference type="GO" id="GO:0006412">
    <property type="term" value="P:translation"/>
    <property type="evidence" value="ECO:0007669"/>
    <property type="project" value="UniProtKB-UniRule"/>
</dbReference>
<dbReference type="FunFam" id="3.30.1440.10:FF:000001">
    <property type="entry name" value="50S ribosomal protein L5"/>
    <property type="match status" value="1"/>
</dbReference>
<dbReference type="Gene3D" id="3.30.1440.10">
    <property type="match status" value="1"/>
</dbReference>
<dbReference type="HAMAP" id="MF_01333_B">
    <property type="entry name" value="Ribosomal_uL5_B"/>
    <property type="match status" value="1"/>
</dbReference>
<dbReference type="InterPro" id="IPR002132">
    <property type="entry name" value="Ribosomal_uL5"/>
</dbReference>
<dbReference type="InterPro" id="IPR020930">
    <property type="entry name" value="Ribosomal_uL5_bac-type"/>
</dbReference>
<dbReference type="InterPro" id="IPR031309">
    <property type="entry name" value="Ribosomal_uL5_C"/>
</dbReference>
<dbReference type="InterPro" id="IPR020929">
    <property type="entry name" value="Ribosomal_uL5_CS"/>
</dbReference>
<dbReference type="InterPro" id="IPR022803">
    <property type="entry name" value="Ribosomal_uL5_dom_sf"/>
</dbReference>
<dbReference type="InterPro" id="IPR031310">
    <property type="entry name" value="Ribosomal_uL5_N"/>
</dbReference>
<dbReference type="NCBIfam" id="NF000585">
    <property type="entry name" value="PRK00010.1"/>
    <property type="match status" value="1"/>
</dbReference>
<dbReference type="PANTHER" id="PTHR11994">
    <property type="entry name" value="60S RIBOSOMAL PROTEIN L11-RELATED"/>
    <property type="match status" value="1"/>
</dbReference>
<dbReference type="Pfam" id="PF00281">
    <property type="entry name" value="Ribosomal_L5"/>
    <property type="match status" value="1"/>
</dbReference>
<dbReference type="Pfam" id="PF00673">
    <property type="entry name" value="Ribosomal_L5_C"/>
    <property type="match status" value="1"/>
</dbReference>
<dbReference type="PIRSF" id="PIRSF002161">
    <property type="entry name" value="Ribosomal_L5"/>
    <property type="match status" value="1"/>
</dbReference>
<dbReference type="SUPFAM" id="SSF55282">
    <property type="entry name" value="RL5-like"/>
    <property type="match status" value="1"/>
</dbReference>
<dbReference type="PROSITE" id="PS00358">
    <property type="entry name" value="RIBOSOMAL_L5"/>
    <property type="match status" value="1"/>
</dbReference>
<evidence type="ECO:0000255" key="1">
    <source>
        <dbReference type="HAMAP-Rule" id="MF_01333"/>
    </source>
</evidence>
<evidence type="ECO:0000305" key="2"/>
<sequence>MAEATYTPRLRTHYDSVVRPKLIEEFGYKNPMQVPVIEKIVINMGVGEATADTKKVTTAAADLARIAGQKPVLTRARKAISNFKLRENQPVGAKVTLRQARMYEFMDRLITVALPRVRDFRGLNPKSFDGRGNYAMGMKEHIVFPEINYDQVEQIWGMDIIVCTTAKTDDEARALLRAFNFPFRQ</sequence>
<reference key="1">
    <citation type="submission" date="2007-04" db="EMBL/GenBank/DDBJ databases">
        <title>Complete genome sequence of the nitrogen-fixing bacterium Azorhizobium caulinodans ORS571.</title>
        <authorList>
            <person name="Lee K.B."/>
            <person name="Backer P.D."/>
            <person name="Aono T."/>
            <person name="Liu C.T."/>
            <person name="Suzuki S."/>
            <person name="Suzuki T."/>
            <person name="Kaneko T."/>
            <person name="Yamada M."/>
            <person name="Tabata S."/>
            <person name="Kupfer D.M."/>
            <person name="Najar F.Z."/>
            <person name="Wiley G.B."/>
            <person name="Roe B."/>
            <person name="Binnewies T."/>
            <person name="Ussery D."/>
            <person name="Vereecke D."/>
            <person name="Gevers D."/>
            <person name="Holsters M."/>
            <person name="Oyaizu H."/>
        </authorList>
    </citation>
    <scope>NUCLEOTIDE SEQUENCE [LARGE SCALE GENOMIC DNA]</scope>
    <source>
        <strain>ATCC 43989 / DSM 5975 / JCM 20966 / LMG 6465 / NBRC 14845 / NCIMB 13405 / ORS 571</strain>
    </source>
</reference>
<gene>
    <name evidence="1" type="primary">rplE</name>
    <name type="ordered locus">AZC_2542</name>
</gene>
<proteinExistence type="inferred from homology"/>
<organism>
    <name type="scientific">Azorhizobium caulinodans (strain ATCC 43989 / DSM 5975 / JCM 20966 / LMG 6465 / NBRC 14845 / NCIMB 13405 / ORS 571)</name>
    <dbReference type="NCBI Taxonomy" id="438753"/>
    <lineage>
        <taxon>Bacteria</taxon>
        <taxon>Pseudomonadati</taxon>
        <taxon>Pseudomonadota</taxon>
        <taxon>Alphaproteobacteria</taxon>
        <taxon>Hyphomicrobiales</taxon>
        <taxon>Xanthobacteraceae</taxon>
        <taxon>Azorhizobium</taxon>
    </lineage>
</organism>
<keyword id="KW-1185">Reference proteome</keyword>
<keyword id="KW-0687">Ribonucleoprotein</keyword>
<keyword id="KW-0689">Ribosomal protein</keyword>
<keyword id="KW-0694">RNA-binding</keyword>
<keyword id="KW-0699">rRNA-binding</keyword>
<keyword id="KW-0820">tRNA-binding</keyword>
<protein>
    <recommendedName>
        <fullName evidence="1">Large ribosomal subunit protein uL5</fullName>
    </recommendedName>
    <alternativeName>
        <fullName evidence="2">50S ribosomal protein L5</fullName>
    </alternativeName>
</protein>